<accession>B4QVI2</accession>
<sequence length="1141" mass="133926">MARYTQRPENALKRANEFIEVGKPLRALDTLQEVFRNKRWNYAYSETVIEPLMFKYLYLCVELKKSHIAKEGLFQYRNMFQLVNVNSLENVIRGYLKMAEEHTEAAQAQSSAAVAVLELDDLDNIATPESILMSAVCGEDAQDRSDRTILLPWVKFLWESYCQCLELLRVNTHCEALYHDIARMAFQFCLKYNRKSEFRRLCDKLRKHLEDICKSSNQTTGVSINKVETQQLCLDTRLYLLDSAIQMELWQEAYKAIEDIHGLMALSKKTPVPKTMANYYQKLAMVFSKAGNQLFHAAALLKLFQLTRELKKNLTKDDLQRMAAHVLLATLSIPLPSAHPEFDRFIEADKSPLEKAQKLAVLLGLPQPPTRVSLIREVVRLNVPQLVSEDFRNLYNWLEVDFNPLNLCKRIQSIVDFIENGPENALLTPYIQSLKDVTIMRLIRQISQVYESIKFQRLLQLASFCNIFELEKLLVESVRHNDMQIRIDHQKNSIYFGTDLTESQREYRPDGPALQSMPSEQIRSQLVNMSTVLTRAVSIVYPNRERDQRAKLRNQMVSQYHEIKDREHQRILQRQKIIEDRKEYIEKQNNAREEEEARRQEEESRKAKLAEQKRLEQEQEERERKRHQNEIQAIREKSLKEKVQQISQTAHGKKMLSKLDEEGIKKLDAEQIAKRESEELQREAKELQSKLKSQEKKIDYFERAKRLEEIPLFEKYLAEKQVKDKEFWEATEKTRIENAIAERKDAVAQQERLKRMYPDRDEFLEALKKERASLYVEKLKKFEAALEAERKKRLADRIVRRREERRQAFLREKEEERLRKEEEIRLAQAAEERAAAEARRLEREAEDEKRRAQYEKQRAKEEEAERKIKEDRDRLSRELASERERTEKERDTWRPRGGDRPSASAGGSSEWRRAAPAVSERNDRGGERIERGGDRVERGGERIERGGERIERGGDRDRKDNEGADSSWRVRREPDTQRAAAPKDSGAPQSRDDKWRRGGERDRDFRNDGARRDRDDGPRRDRDDGPRRDRDDERGGFRRNDGPRRTDEPQRETGGNWRDAPRHADRENRRPAGERRDRDVRETRGDQRGSAPKEAASGGGGGNWRNAPATREEKPAAKRDQAQEKENKAGDDGEWTSVKRR</sequence>
<protein>
    <recommendedName>
        <fullName evidence="1">Eukaryotic translation initiation factor 3 subunit A</fullName>
        <shortName evidence="1">eIF3a</shortName>
    </recommendedName>
    <alternativeName>
        <fullName evidence="1">Eukaryotic translation initiation factor 3 subunit 10</fullName>
    </alternativeName>
</protein>
<feature type="chain" id="PRO_0000366342" description="Eukaryotic translation initiation factor 3 subunit A">
    <location>
        <begin position="1"/>
        <end position="1141"/>
    </location>
</feature>
<feature type="domain" description="PCI" evidence="2">
    <location>
        <begin position="319"/>
        <end position="501"/>
    </location>
</feature>
<feature type="region of interest" description="Disordered" evidence="3">
    <location>
        <begin position="588"/>
        <end position="631"/>
    </location>
</feature>
<feature type="region of interest" description="Disordered" evidence="3">
    <location>
        <begin position="829"/>
        <end position="1141"/>
    </location>
</feature>
<feature type="compositionally biased region" description="Basic and acidic residues" evidence="3">
    <location>
        <begin position="588"/>
        <end position="623"/>
    </location>
</feature>
<feature type="compositionally biased region" description="Basic and acidic residues" evidence="3">
    <location>
        <begin position="829"/>
        <end position="899"/>
    </location>
</feature>
<feature type="compositionally biased region" description="Basic and acidic residues" evidence="3">
    <location>
        <begin position="920"/>
        <end position="976"/>
    </location>
</feature>
<feature type="compositionally biased region" description="Basic and acidic residues" evidence="3">
    <location>
        <begin position="990"/>
        <end position="1051"/>
    </location>
</feature>
<feature type="compositionally biased region" description="Basic and acidic residues" evidence="3">
    <location>
        <begin position="1059"/>
        <end position="1087"/>
    </location>
</feature>
<feature type="compositionally biased region" description="Basic and acidic residues" evidence="3">
    <location>
        <begin position="1110"/>
        <end position="1131"/>
    </location>
</feature>
<feature type="modified residue" description="Phosphoserine" evidence="1">
    <location>
        <position position="908"/>
    </location>
</feature>
<proteinExistence type="inferred from homology"/>
<comment type="function">
    <text evidence="1">RNA-binding component of the eukaryotic translation initiation factor 3 (eIF-3) complex, which is involved in protein synthesis of a specialized repertoire of mRNAs and, together with other initiation factors, stimulates binding of mRNA and methionyl-tRNAi to the 40S ribosome. The eIF-3 complex specifically targets and initiates translation of a subset of mRNAs involved in cell proliferation.</text>
</comment>
<comment type="subunit">
    <text evidence="1">Component of the eukaryotic translation initiation factor 3 (eIF-3) complex. The eIF-3 complex interacts with pix.</text>
</comment>
<comment type="subcellular location">
    <subcellularLocation>
        <location evidence="1">Cytoplasm</location>
    </subcellularLocation>
</comment>
<comment type="similarity">
    <text evidence="1">Belongs to the eIF-3 subunit A family.</text>
</comment>
<reference key="1">
    <citation type="journal article" date="2007" name="Nature">
        <title>Evolution of genes and genomes on the Drosophila phylogeny.</title>
        <authorList>
            <consortium name="Drosophila 12 genomes consortium"/>
        </authorList>
    </citation>
    <scope>NUCLEOTIDE SEQUENCE [LARGE SCALE GENOMIC DNA]</scope>
</reference>
<dbReference type="EMBL" id="CM000364">
    <property type="protein sequence ID" value="EDX11607.1"/>
    <property type="molecule type" value="Genomic_DNA"/>
</dbReference>
<dbReference type="SMR" id="B4QVI2"/>
<dbReference type="STRING" id="7240.B4QVI2"/>
<dbReference type="EnsemblMetazoa" id="FBtr0356041">
    <property type="protein sequence ID" value="FBpp0320261"/>
    <property type="gene ID" value="FBgn0191169"/>
</dbReference>
<dbReference type="EnsemblMetazoa" id="XM_016176038.3">
    <property type="protein sequence ID" value="XP_016033181.1"/>
    <property type="gene ID" value="LOC6726693"/>
</dbReference>
<dbReference type="HOGENOM" id="CLU_002096_1_0_1"/>
<dbReference type="OMA" id="EHITNKR"/>
<dbReference type="OrthoDB" id="18884at2759"/>
<dbReference type="PhylomeDB" id="B4QVI2"/>
<dbReference type="ChiTaRS" id="eIF3-S10">
    <property type="organism name" value="fly"/>
</dbReference>
<dbReference type="Proteomes" id="UP000000304">
    <property type="component" value="Chromosome 3R"/>
</dbReference>
<dbReference type="Bgee" id="FBgn0191169">
    <property type="expression patterns" value="Expressed in embryo and 3 other cell types or tissues"/>
</dbReference>
<dbReference type="GO" id="GO:0016282">
    <property type="term" value="C:eukaryotic 43S preinitiation complex"/>
    <property type="evidence" value="ECO:0007669"/>
    <property type="project" value="UniProtKB-UniRule"/>
</dbReference>
<dbReference type="GO" id="GO:0033290">
    <property type="term" value="C:eukaryotic 48S preinitiation complex"/>
    <property type="evidence" value="ECO:0007669"/>
    <property type="project" value="UniProtKB-UniRule"/>
</dbReference>
<dbReference type="GO" id="GO:0005852">
    <property type="term" value="C:eukaryotic translation initiation factor 3 complex"/>
    <property type="evidence" value="ECO:0000250"/>
    <property type="project" value="UniProtKB"/>
</dbReference>
<dbReference type="GO" id="GO:0071540">
    <property type="term" value="C:eukaryotic translation initiation factor 3 complex, eIF3e"/>
    <property type="evidence" value="ECO:0007669"/>
    <property type="project" value="TreeGrafter"/>
</dbReference>
<dbReference type="GO" id="GO:0071541">
    <property type="term" value="C:eukaryotic translation initiation factor 3 complex, eIF3m"/>
    <property type="evidence" value="ECO:0007669"/>
    <property type="project" value="TreeGrafter"/>
</dbReference>
<dbReference type="GO" id="GO:0043614">
    <property type="term" value="C:multi-eIF complex"/>
    <property type="evidence" value="ECO:0007669"/>
    <property type="project" value="TreeGrafter"/>
</dbReference>
<dbReference type="GO" id="GO:0003729">
    <property type="term" value="F:mRNA binding"/>
    <property type="evidence" value="ECO:0007669"/>
    <property type="project" value="TreeGrafter"/>
</dbReference>
<dbReference type="GO" id="GO:0003743">
    <property type="term" value="F:translation initiation factor activity"/>
    <property type="evidence" value="ECO:0000250"/>
    <property type="project" value="UniProtKB"/>
</dbReference>
<dbReference type="GO" id="GO:0001732">
    <property type="term" value="P:formation of cytoplasmic translation initiation complex"/>
    <property type="evidence" value="ECO:0007669"/>
    <property type="project" value="UniProtKB-UniRule"/>
</dbReference>
<dbReference type="GO" id="GO:0006446">
    <property type="term" value="P:regulation of translational initiation"/>
    <property type="evidence" value="ECO:0000250"/>
    <property type="project" value="UniProtKB"/>
</dbReference>
<dbReference type="GO" id="GO:0002188">
    <property type="term" value="P:translation reinitiation"/>
    <property type="evidence" value="ECO:0007669"/>
    <property type="project" value="TreeGrafter"/>
</dbReference>
<dbReference type="FunFam" id="1.25.40.860:FF:000007">
    <property type="entry name" value="Eukaryotic translation initiation factor 3 subunit A"/>
    <property type="match status" value="1"/>
</dbReference>
<dbReference type="FunFam" id="4.10.860.10:FF:000001">
    <property type="entry name" value="Eukaryotic translation initiation factor 3 subunit A"/>
    <property type="match status" value="1"/>
</dbReference>
<dbReference type="Gene3D" id="1.25.40.860">
    <property type="match status" value="2"/>
</dbReference>
<dbReference type="Gene3D" id="4.10.860.10">
    <property type="entry name" value="UVR domain"/>
    <property type="match status" value="1"/>
</dbReference>
<dbReference type="HAMAP" id="MF_03000">
    <property type="entry name" value="eIF3a"/>
    <property type="match status" value="1"/>
</dbReference>
<dbReference type="InterPro" id="IPR027512">
    <property type="entry name" value="EIF3A"/>
</dbReference>
<dbReference type="InterPro" id="IPR054711">
    <property type="entry name" value="eIF3a_PCI_TPR-like"/>
</dbReference>
<dbReference type="InterPro" id="IPR000717">
    <property type="entry name" value="PCI_dom"/>
</dbReference>
<dbReference type="PANTHER" id="PTHR14005:SF0">
    <property type="entry name" value="EUKARYOTIC TRANSLATION INITIATION FACTOR 3 SUBUNIT A"/>
    <property type="match status" value="1"/>
</dbReference>
<dbReference type="PANTHER" id="PTHR14005">
    <property type="entry name" value="EUKARYOTIC TRANSLATION INITIATION FACTOR 3, THETA SUBUNIT"/>
    <property type="match status" value="1"/>
</dbReference>
<dbReference type="Pfam" id="PF22591">
    <property type="entry name" value="eIF3a_PCI_TPR-like"/>
    <property type="match status" value="1"/>
</dbReference>
<dbReference type="Pfam" id="PF01399">
    <property type="entry name" value="PCI"/>
    <property type="match status" value="1"/>
</dbReference>
<dbReference type="PROSITE" id="PS50250">
    <property type="entry name" value="PCI"/>
    <property type="match status" value="1"/>
</dbReference>
<gene>
    <name evidence="1" type="primary">eIF3a</name>
    <name evidence="1" type="synonym">eIF3-S10</name>
    <name type="ORF">GD19678</name>
</gene>
<evidence type="ECO:0000255" key="1">
    <source>
        <dbReference type="HAMAP-Rule" id="MF_03000"/>
    </source>
</evidence>
<evidence type="ECO:0000255" key="2">
    <source>
        <dbReference type="PROSITE-ProRule" id="PRU01185"/>
    </source>
</evidence>
<evidence type="ECO:0000256" key="3">
    <source>
        <dbReference type="SAM" id="MobiDB-lite"/>
    </source>
</evidence>
<name>EIF3A_DROSI</name>
<keyword id="KW-0963">Cytoplasm</keyword>
<keyword id="KW-0396">Initiation factor</keyword>
<keyword id="KW-0597">Phosphoprotein</keyword>
<keyword id="KW-0648">Protein biosynthesis</keyword>
<keyword id="KW-1185">Reference proteome</keyword>
<keyword id="KW-0694">RNA-binding</keyword>
<organism>
    <name type="scientific">Drosophila simulans</name>
    <name type="common">Fruit fly</name>
    <dbReference type="NCBI Taxonomy" id="7240"/>
    <lineage>
        <taxon>Eukaryota</taxon>
        <taxon>Metazoa</taxon>
        <taxon>Ecdysozoa</taxon>
        <taxon>Arthropoda</taxon>
        <taxon>Hexapoda</taxon>
        <taxon>Insecta</taxon>
        <taxon>Pterygota</taxon>
        <taxon>Neoptera</taxon>
        <taxon>Endopterygota</taxon>
        <taxon>Diptera</taxon>
        <taxon>Brachycera</taxon>
        <taxon>Muscomorpha</taxon>
        <taxon>Ephydroidea</taxon>
        <taxon>Drosophilidae</taxon>
        <taxon>Drosophila</taxon>
        <taxon>Sophophora</taxon>
    </lineage>
</organism>